<sequence>MVSFSTLLTACTAITGALGTPDLDRRQNVTPNAQGTHNGYFYSWWSDGQSPVTYTNSAGGSYSVEWSSGGNLVGGKGWNPGSAKEIRYSASWQPTNNSNSYLTIYGWTRSPLVEYYIVESHGEYNPGSSAEPRGEIEAHGSIYKLYESTRVQQPSIDGTQTFQQYWAIRQTHRTSGTVTTGTFFNAWAAAGMPIGQHNYMIVATEAYNSAGRASVVVETPP</sequence>
<accession>G2X5X8</accession>
<feature type="signal peptide" evidence="2">
    <location>
        <begin position="1"/>
        <end position="19"/>
    </location>
</feature>
<feature type="chain" id="PRO_5003439681" description="Ethylene-inducing xylanase 4">
    <location>
        <begin position="20"/>
        <end position="221"/>
    </location>
</feature>
<feature type="domain" description="GH11" evidence="4">
    <location>
        <begin position="28"/>
        <end position="218"/>
    </location>
</feature>
<feature type="active site" description="Nucleophile" evidence="4">
    <location>
        <position position="114"/>
    </location>
</feature>
<feature type="active site" description="Proton donor" evidence="4">
    <location>
        <position position="205"/>
    </location>
</feature>
<feature type="glycosylation site" description="N-linked (GlcNAc...) asparagine" evidence="3">
    <location>
        <position position="96"/>
    </location>
</feature>
<proteinExistence type="inferred from homology"/>
<gene>
    <name evidence="6" type="primary">EIX4</name>
    <name type="ORF">VDAG_05294</name>
</gene>
<reference key="1">
    <citation type="journal article" date="2011" name="PLoS Pathog.">
        <title>Comparative genomics yields insights into niche adaptation of plant vascular wilt pathogens.</title>
        <authorList>
            <person name="Klosterman S.J."/>
            <person name="Subbarao K.V."/>
            <person name="Kang S."/>
            <person name="Veronese P."/>
            <person name="Gold S.E."/>
            <person name="Thomma B.P.H.J."/>
            <person name="Chen Z."/>
            <person name="Henrissat B."/>
            <person name="Lee Y.-H."/>
            <person name="Park J."/>
            <person name="Garcia-Pedrajas M.D."/>
            <person name="Barbara D.J."/>
            <person name="Anchieta A."/>
            <person name="de Jonge R."/>
            <person name="Santhanam P."/>
            <person name="Maruthachalam K."/>
            <person name="Atallah Z."/>
            <person name="Amyotte S.G."/>
            <person name="Paz Z."/>
            <person name="Inderbitzin P."/>
            <person name="Hayes R.J."/>
            <person name="Heiman D.I."/>
            <person name="Young S."/>
            <person name="Zeng Q."/>
            <person name="Engels R."/>
            <person name="Galagan J."/>
            <person name="Cuomo C.A."/>
            <person name="Dobinson K.F."/>
            <person name="Ma L.-J."/>
        </authorList>
    </citation>
    <scope>NUCLEOTIDE SEQUENCE [LARGE SCALE GENOMIC DNA]</scope>
    <source>
        <strain>VdLs.17 / ATCC MYA-4575 / FGSC 10137</strain>
    </source>
</reference>
<reference key="2">
    <citation type="journal article" date="2021" name="J. Integr. Plant Biol.">
        <title>Nicotiana benthamiana LRR-RLP NbEIX2 mediates the perception of an EIX-like protein from Verticillium dahliae.</title>
        <authorList>
            <person name="Yin Z."/>
            <person name="Wang N."/>
            <person name="Pi L."/>
            <person name="Li L."/>
            <person name="Duan W."/>
            <person name="Wang X."/>
            <person name="Dou D."/>
        </authorList>
    </citation>
    <scope>FUNCTION</scope>
</reference>
<evidence type="ECO:0000250" key="1">
    <source>
        <dbReference type="UniProtKB" id="B3VSG7"/>
    </source>
</evidence>
<evidence type="ECO:0000255" key="2"/>
<evidence type="ECO:0000255" key="3">
    <source>
        <dbReference type="PROSITE-ProRule" id="PRU00498"/>
    </source>
</evidence>
<evidence type="ECO:0000255" key="4">
    <source>
        <dbReference type="PROSITE-ProRule" id="PRU01097"/>
    </source>
</evidence>
<evidence type="ECO:0000269" key="5">
    <source>
    </source>
</evidence>
<evidence type="ECO:0000303" key="6">
    <source>
    </source>
</evidence>
<keyword id="KW-0119">Carbohydrate metabolism</keyword>
<keyword id="KW-0325">Glycoprotein</keyword>
<keyword id="KW-0326">Glycosidase</keyword>
<keyword id="KW-0378">Hydrolase</keyword>
<keyword id="KW-0624">Polysaccharide degradation</keyword>
<keyword id="KW-1185">Reference proteome</keyword>
<keyword id="KW-0732">Signal</keyword>
<keyword id="KW-0858">Xylan degradation</keyword>
<name>EIX4_VERDV</name>
<organism>
    <name type="scientific">Verticillium dahliae (strain VdLs.17 / ATCC MYA-4575 / FGSC 10137)</name>
    <name type="common">Verticillium wilt</name>
    <dbReference type="NCBI Taxonomy" id="498257"/>
    <lineage>
        <taxon>Eukaryota</taxon>
        <taxon>Fungi</taxon>
        <taxon>Dikarya</taxon>
        <taxon>Ascomycota</taxon>
        <taxon>Pezizomycotina</taxon>
        <taxon>Sordariomycetes</taxon>
        <taxon>Hypocreomycetidae</taxon>
        <taxon>Glomerellales</taxon>
        <taxon>Plectosphaerellaceae</taxon>
        <taxon>Verticillium</taxon>
    </lineage>
</organism>
<dbReference type="EC" id="3.2.1.8" evidence="4"/>
<dbReference type="EMBL" id="DS572704">
    <property type="protein sequence ID" value="EGY14130.1"/>
    <property type="molecule type" value="Genomic_DNA"/>
</dbReference>
<dbReference type="RefSeq" id="XP_009650484.1">
    <property type="nucleotide sequence ID" value="XM_009652189.1"/>
</dbReference>
<dbReference type="EnsemblFungi" id="EGY14130">
    <property type="protein sequence ID" value="EGY14130"/>
    <property type="gene ID" value="VDAG_05294"/>
</dbReference>
<dbReference type="GeneID" id="20706757"/>
<dbReference type="KEGG" id="vda:VDAG_05294"/>
<dbReference type="eggNOG" id="ENOG502RXA7">
    <property type="taxonomic scope" value="Eukaryota"/>
</dbReference>
<dbReference type="HOGENOM" id="CLU_052631_0_0_1"/>
<dbReference type="InParanoid" id="G2X5X8"/>
<dbReference type="OMA" id="FKQFWAI"/>
<dbReference type="OrthoDB" id="30242at1028384"/>
<dbReference type="UniPathway" id="UPA00114"/>
<dbReference type="Proteomes" id="UP000001611">
    <property type="component" value="Chromosome 2"/>
</dbReference>
<dbReference type="GO" id="GO:0031176">
    <property type="term" value="F:endo-1,4-beta-xylanase activity"/>
    <property type="evidence" value="ECO:0007669"/>
    <property type="project" value="UniProtKB-UniRule"/>
</dbReference>
<dbReference type="GO" id="GO:0045493">
    <property type="term" value="P:xylan catabolic process"/>
    <property type="evidence" value="ECO:0007669"/>
    <property type="project" value="UniProtKB-UniRule"/>
</dbReference>
<dbReference type="FunFam" id="2.60.120.180:FF:000001">
    <property type="entry name" value="Endo-1,4-beta-xylanase"/>
    <property type="match status" value="1"/>
</dbReference>
<dbReference type="Gene3D" id="2.60.120.180">
    <property type="match status" value="1"/>
</dbReference>
<dbReference type="InterPro" id="IPR013320">
    <property type="entry name" value="ConA-like_dom_sf"/>
</dbReference>
<dbReference type="InterPro" id="IPR013319">
    <property type="entry name" value="GH11/12"/>
</dbReference>
<dbReference type="InterPro" id="IPR018208">
    <property type="entry name" value="GH11_AS_1"/>
</dbReference>
<dbReference type="InterPro" id="IPR033123">
    <property type="entry name" value="GH11_dom"/>
</dbReference>
<dbReference type="InterPro" id="IPR001137">
    <property type="entry name" value="Glyco_hydro_11"/>
</dbReference>
<dbReference type="PANTHER" id="PTHR46828">
    <property type="entry name" value="ENDO-1,4-BETA-XYLANASE A-RELATED"/>
    <property type="match status" value="1"/>
</dbReference>
<dbReference type="PANTHER" id="PTHR46828:SF2">
    <property type="entry name" value="ENDO-1,4-BETA-XYLANASE A-RELATED"/>
    <property type="match status" value="1"/>
</dbReference>
<dbReference type="Pfam" id="PF00457">
    <property type="entry name" value="Glyco_hydro_11"/>
    <property type="match status" value="1"/>
</dbReference>
<dbReference type="PRINTS" id="PR00911">
    <property type="entry name" value="GLHYDRLASE11"/>
</dbReference>
<dbReference type="SUPFAM" id="SSF49899">
    <property type="entry name" value="Concanavalin A-like lectins/glucanases"/>
    <property type="match status" value="1"/>
</dbReference>
<dbReference type="PROSITE" id="PS00776">
    <property type="entry name" value="GH11_1"/>
    <property type="match status" value="1"/>
</dbReference>
<dbReference type="PROSITE" id="PS51761">
    <property type="entry name" value="GH11_3"/>
    <property type="match status" value="1"/>
</dbReference>
<comment type="function">
    <text evidence="1 5">Endo-1,4-beta-xylanase involved in the hydrolysis of xylan, a major structural heterogeneous polysaccharide found in plant biomass representing the second most abundant polysaccharide in the biosphere, after cellulose (By similarity). May act as an elicitor of plant defense responses in certain plants but does not exhibit any cell death when transiently expressed in N.benthamiana (PubMed:33205907).</text>
</comment>
<comment type="catalytic activity">
    <reaction evidence="4">
        <text>Endohydrolysis of (1-&gt;4)-beta-D-xylosidic linkages in xylans.</text>
        <dbReference type="EC" id="3.2.1.8"/>
    </reaction>
</comment>
<comment type="pathway">
    <text evidence="4">Glycan degradation; xylan degradation.</text>
</comment>
<comment type="similarity">
    <text evidence="4">Belongs to the glycosyl hydrolase 11 (cellulase G) family.</text>
</comment>
<protein>
    <recommendedName>
        <fullName evidence="6">Ethylene-inducing xylanase 4</fullName>
        <shortName evidence="6">EIX4</shortName>
        <ecNumber evidence="4">3.2.1.8</ecNumber>
    </recommendedName>
    <alternativeName>
        <fullName evidence="6">Endo-1,4-beta-xylanase EIX4</fullName>
    </alternativeName>
</protein>